<feature type="chain" id="PRO_0000430297" description="Probable magnesium transporter NIPA9">
    <location>
        <begin position="1"/>
        <end position="344"/>
    </location>
</feature>
<feature type="topological domain" description="Cytoplasmic" evidence="2">
    <location>
        <begin position="1"/>
        <end position="46"/>
    </location>
</feature>
<feature type="transmembrane region" description="Helical; Name=1" evidence="2">
    <location>
        <begin position="47"/>
        <end position="67"/>
    </location>
</feature>
<feature type="transmembrane region" description="Helical; Name=2" evidence="2">
    <location>
        <begin position="68"/>
        <end position="88"/>
    </location>
</feature>
<feature type="topological domain" description="Cytoplasmic" evidence="2">
    <location>
        <begin position="89"/>
        <end position="98"/>
    </location>
</feature>
<feature type="transmembrane region" description="Helical; Name=3" evidence="2">
    <location>
        <begin position="99"/>
        <end position="119"/>
    </location>
</feature>
<feature type="topological domain" description="Extracellular" evidence="2">
    <location>
        <begin position="120"/>
        <end position="125"/>
    </location>
</feature>
<feature type="transmembrane region" description="Helical; Name=4" evidence="2">
    <location>
        <begin position="126"/>
        <end position="146"/>
    </location>
</feature>
<feature type="topological domain" description="Cytoplasmic" evidence="2">
    <location>
        <begin position="147"/>
        <end position="166"/>
    </location>
</feature>
<feature type="transmembrane region" description="Helical; Name=5" evidence="2">
    <location>
        <begin position="167"/>
        <end position="187"/>
    </location>
</feature>
<feature type="topological domain" description="Extracellular" evidence="2">
    <location>
        <begin position="188"/>
        <end position="191"/>
    </location>
</feature>
<feature type="transmembrane region" description="Helical; Name=6" evidence="2">
    <location>
        <begin position="192"/>
        <end position="212"/>
    </location>
</feature>
<feature type="topological domain" description="Cytoplasmic" evidence="2">
    <location>
        <begin position="213"/>
        <end position="231"/>
    </location>
</feature>
<feature type="transmembrane region" description="Helical; Name=7" evidence="2">
    <location>
        <begin position="232"/>
        <end position="252"/>
    </location>
</feature>
<feature type="topological domain" description="Extracellular" evidence="2">
    <location>
        <begin position="253"/>
        <end position="265"/>
    </location>
</feature>
<feature type="transmembrane region" description="Helical; Name=8" evidence="2">
    <location>
        <begin position="266"/>
        <end position="286"/>
    </location>
</feature>
<feature type="topological domain" description="Cytoplasmic" evidence="2">
    <location>
        <begin position="287"/>
        <end position="344"/>
    </location>
</feature>
<evidence type="ECO:0000250" key="1"/>
<evidence type="ECO:0000255" key="2"/>
<evidence type="ECO:0000305" key="3"/>
<protein>
    <recommendedName>
        <fullName>Probable magnesium transporter NIPA9</fullName>
    </recommendedName>
</protein>
<gene>
    <name type="ordered locus">At5g11960</name>
    <name type="ORF">F14F18_130</name>
</gene>
<reference key="1">
    <citation type="journal article" date="2000" name="Nature">
        <title>Sequence and analysis of chromosome 5 of the plant Arabidopsis thaliana.</title>
        <authorList>
            <person name="Tabata S."/>
            <person name="Kaneko T."/>
            <person name="Nakamura Y."/>
            <person name="Kotani H."/>
            <person name="Kato T."/>
            <person name="Asamizu E."/>
            <person name="Miyajima N."/>
            <person name="Sasamoto S."/>
            <person name="Kimura T."/>
            <person name="Hosouchi T."/>
            <person name="Kawashima K."/>
            <person name="Kohara M."/>
            <person name="Matsumoto M."/>
            <person name="Matsuno A."/>
            <person name="Muraki A."/>
            <person name="Nakayama S."/>
            <person name="Nakazaki N."/>
            <person name="Naruo K."/>
            <person name="Okumura S."/>
            <person name="Shinpo S."/>
            <person name="Takeuchi C."/>
            <person name="Wada T."/>
            <person name="Watanabe A."/>
            <person name="Yamada M."/>
            <person name="Yasuda M."/>
            <person name="Sato S."/>
            <person name="de la Bastide M."/>
            <person name="Huang E."/>
            <person name="Spiegel L."/>
            <person name="Gnoj L."/>
            <person name="O'Shaughnessy A."/>
            <person name="Preston R."/>
            <person name="Habermann K."/>
            <person name="Murray J."/>
            <person name="Johnson D."/>
            <person name="Rohlfing T."/>
            <person name="Nelson J."/>
            <person name="Stoneking T."/>
            <person name="Pepin K."/>
            <person name="Spieth J."/>
            <person name="Sekhon M."/>
            <person name="Armstrong J."/>
            <person name="Becker M."/>
            <person name="Belter E."/>
            <person name="Cordum H."/>
            <person name="Cordes M."/>
            <person name="Courtney L."/>
            <person name="Courtney W."/>
            <person name="Dante M."/>
            <person name="Du H."/>
            <person name="Edwards J."/>
            <person name="Fryman J."/>
            <person name="Haakensen B."/>
            <person name="Lamar E."/>
            <person name="Latreille P."/>
            <person name="Leonard S."/>
            <person name="Meyer R."/>
            <person name="Mulvaney E."/>
            <person name="Ozersky P."/>
            <person name="Riley A."/>
            <person name="Strowmatt C."/>
            <person name="Wagner-McPherson C."/>
            <person name="Wollam A."/>
            <person name="Yoakum M."/>
            <person name="Bell M."/>
            <person name="Dedhia N."/>
            <person name="Parnell L."/>
            <person name="Shah R."/>
            <person name="Rodriguez M."/>
            <person name="Hoon See L."/>
            <person name="Vil D."/>
            <person name="Baker J."/>
            <person name="Kirchoff K."/>
            <person name="Toth K."/>
            <person name="King L."/>
            <person name="Bahret A."/>
            <person name="Miller B."/>
            <person name="Marra M.A."/>
            <person name="Martienssen R."/>
            <person name="McCombie W.R."/>
            <person name="Wilson R.K."/>
            <person name="Murphy G."/>
            <person name="Bancroft I."/>
            <person name="Volckaert G."/>
            <person name="Wambutt R."/>
            <person name="Duesterhoeft A."/>
            <person name="Stiekema W."/>
            <person name="Pohl T."/>
            <person name="Entian K.-D."/>
            <person name="Terryn N."/>
            <person name="Hartley N."/>
            <person name="Bent E."/>
            <person name="Johnson S."/>
            <person name="Langham S.-A."/>
            <person name="McCullagh B."/>
            <person name="Robben J."/>
            <person name="Grymonprez B."/>
            <person name="Zimmermann W."/>
            <person name="Ramsperger U."/>
            <person name="Wedler H."/>
            <person name="Balke K."/>
            <person name="Wedler E."/>
            <person name="Peters S."/>
            <person name="van Staveren M."/>
            <person name="Dirkse W."/>
            <person name="Mooijman P."/>
            <person name="Klein Lankhorst R."/>
            <person name="Weitzenegger T."/>
            <person name="Bothe G."/>
            <person name="Rose M."/>
            <person name="Hauf J."/>
            <person name="Berneiser S."/>
            <person name="Hempel S."/>
            <person name="Feldpausch M."/>
            <person name="Lamberth S."/>
            <person name="Villarroel R."/>
            <person name="Gielen J."/>
            <person name="Ardiles W."/>
            <person name="Bents O."/>
            <person name="Lemcke K."/>
            <person name="Kolesov G."/>
            <person name="Mayer K.F.X."/>
            <person name="Rudd S."/>
            <person name="Schoof H."/>
            <person name="Schueller C."/>
            <person name="Zaccaria P."/>
            <person name="Mewes H.-W."/>
            <person name="Bevan M."/>
            <person name="Fransz P.F."/>
        </authorList>
    </citation>
    <scope>NUCLEOTIDE SEQUENCE [LARGE SCALE GENOMIC DNA]</scope>
    <source>
        <strain>cv. Columbia</strain>
    </source>
</reference>
<reference key="2">
    <citation type="journal article" date="2017" name="Plant J.">
        <title>Araport11: a complete reannotation of the Arabidopsis thaliana reference genome.</title>
        <authorList>
            <person name="Cheng C.Y."/>
            <person name="Krishnakumar V."/>
            <person name="Chan A.P."/>
            <person name="Thibaud-Nissen F."/>
            <person name="Schobel S."/>
            <person name="Town C.D."/>
        </authorList>
    </citation>
    <scope>GENOME REANNOTATION</scope>
    <source>
        <strain>cv. Columbia</strain>
    </source>
</reference>
<reference key="3">
    <citation type="journal article" date="2003" name="Science">
        <title>Empirical analysis of transcriptional activity in the Arabidopsis genome.</title>
        <authorList>
            <person name="Yamada K."/>
            <person name="Lim J."/>
            <person name="Dale J.M."/>
            <person name="Chen H."/>
            <person name="Shinn P."/>
            <person name="Palm C.J."/>
            <person name="Southwick A.M."/>
            <person name="Wu H.C."/>
            <person name="Kim C.J."/>
            <person name="Nguyen M."/>
            <person name="Pham P.K."/>
            <person name="Cheuk R.F."/>
            <person name="Karlin-Newmann G."/>
            <person name="Liu S.X."/>
            <person name="Lam B."/>
            <person name="Sakano H."/>
            <person name="Wu T."/>
            <person name="Yu G."/>
            <person name="Miranda M."/>
            <person name="Quach H.L."/>
            <person name="Tripp M."/>
            <person name="Chang C.H."/>
            <person name="Lee J.M."/>
            <person name="Toriumi M.J."/>
            <person name="Chan M.M."/>
            <person name="Tang C.C."/>
            <person name="Onodera C.S."/>
            <person name="Deng J.M."/>
            <person name="Akiyama K."/>
            <person name="Ansari Y."/>
            <person name="Arakawa T."/>
            <person name="Banh J."/>
            <person name="Banno F."/>
            <person name="Bowser L."/>
            <person name="Brooks S.Y."/>
            <person name="Carninci P."/>
            <person name="Chao Q."/>
            <person name="Choy N."/>
            <person name="Enju A."/>
            <person name="Goldsmith A.D."/>
            <person name="Gurjal M."/>
            <person name="Hansen N.F."/>
            <person name="Hayashizaki Y."/>
            <person name="Johnson-Hopson C."/>
            <person name="Hsuan V.W."/>
            <person name="Iida K."/>
            <person name="Karnes M."/>
            <person name="Khan S."/>
            <person name="Koesema E."/>
            <person name="Ishida J."/>
            <person name="Jiang P.X."/>
            <person name="Jones T."/>
            <person name="Kawai J."/>
            <person name="Kamiya A."/>
            <person name="Meyers C."/>
            <person name="Nakajima M."/>
            <person name="Narusaka M."/>
            <person name="Seki M."/>
            <person name="Sakurai T."/>
            <person name="Satou M."/>
            <person name="Tamse R."/>
            <person name="Vaysberg M."/>
            <person name="Wallender E.K."/>
            <person name="Wong C."/>
            <person name="Yamamura Y."/>
            <person name="Yuan S."/>
            <person name="Shinozaki K."/>
            <person name="Davis R.W."/>
            <person name="Theologis A."/>
            <person name="Ecker J.R."/>
        </authorList>
    </citation>
    <scope>NUCLEOTIDE SEQUENCE [LARGE SCALE MRNA]</scope>
    <source>
        <strain>cv. Columbia</strain>
    </source>
</reference>
<keyword id="KW-1003">Cell membrane</keyword>
<keyword id="KW-0967">Endosome</keyword>
<keyword id="KW-0406">Ion transport</keyword>
<keyword id="KW-0460">Magnesium</keyword>
<keyword id="KW-0472">Membrane</keyword>
<keyword id="KW-1185">Reference proteome</keyword>
<keyword id="KW-0812">Transmembrane</keyword>
<keyword id="KW-1133">Transmembrane helix</keyword>
<keyword id="KW-0813">Transport</keyword>
<sequence>MWESICLTLAATAGNNIGKVLQKKGTIILPPLSLKLKVLRAYAENKPWALGFLMDIVGALLMLRALSLAPVSVVQPVSGCGLAILSVFSHFYLKEVMNVFDWIGITVAGIGTIGVGAGGEEQEASLISVFQLLWLALVVAILFVLLNAWLHIFKRQRREQELGEYEVVEEIIYGLESGILFGMASVVSKMGFVFVEQGFSTMFIPMCISISICCSGTGFFYQTRGLKHGRAIVVSTCAAVASIVTGVVAGMFALGEKLPTSPSGRLLLLLGWLLIMLGVVLLVTSSRLIRHLPRSFRRSRQTSLERGFNIRRTTSHTPKDTNPSAVIQAATLHHLLSSPSKDKD</sequence>
<organism>
    <name type="scientific">Arabidopsis thaliana</name>
    <name type="common">Mouse-ear cress</name>
    <dbReference type="NCBI Taxonomy" id="3702"/>
    <lineage>
        <taxon>Eukaryota</taxon>
        <taxon>Viridiplantae</taxon>
        <taxon>Streptophyta</taxon>
        <taxon>Embryophyta</taxon>
        <taxon>Tracheophyta</taxon>
        <taxon>Spermatophyta</taxon>
        <taxon>Magnoliopsida</taxon>
        <taxon>eudicotyledons</taxon>
        <taxon>Gunneridae</taxon>
        <taxon>Pentapetalae</taxon>
        <taxon>rosids</taxon>
        <taxon>malvids</taxon>
        <taxon>Brassicales</taxon>
        <taxon>Brassicaceae</taxon>
        <taxon>Camelineae</taxon>
        <taxon>Arabidopsis</taxon>
    </lineage>
</organism>
<comment type="function">
    <text evidence="1">Acts as a Mg(2+) transporter. Can also transport other divalent cations such as Fe(2+), Sr(2+), Ba(2+), Mn(2+) and Co(2+) but to a much less extent than Mg(2+) (By similarity).</text>
</comment>
<comment type="subunit">
    <text evidence="1">Homodimer.</text>
</comment>
<comment type="subcellular location">
    <subcellularLocation>
        <location evidence="1">Cell membrane</location>
        <topology evidence="1">Multi-pass membrane protein</topology>
    </subcellularLocation>
    <subcellularLocation>
        <location evidence="1">Early endosome</location>
    </subcellularLocation>
    <text evidence="1">Recruited to the cell membrane in response to low extracellular magnesium.</text>
</comment>
<comment type="similarity">
    <text evidence="3">Belongs to the NIPA (TC 2.A.7) family.</text>
</comment>
<comment type="caution">
    <text evidence="3">Lacks one of the 9 transmembrane regions, which are conserved features of the family.</text>
</comment>
<comment type="sequence caution" evidence="3">
    <conflict type="erroneous gene model prediction">
        <sequence resource="EMBL-CDS" id="CAB87669"/>
    </conflict>
</comment>
<accession>Q8RWH8</accession>
<accession>Q9LYH7</accession>
<dbReference type="EMBL" id="AL163812">
    <property type="protein sequence ID" value="CAB87669.1"/>
    <property type="status" value="ALT_SEQ"/>
    <property type="molecule type" value="Genomic_DNA"/>
</dbReference>
<dbReference type="EMBL" id="CP002688">
    <property type="protein sequence ID" value="AED91745.1"/>
    <property type="molecule type" value="Genomic_DNA"/>
</dbReference>
<dbReference type="EMBL" id="AY093077">
    <property type="protein sequence ID" value="AAM13076.1"/>
    <property type="molecule type" value="mRNA"/>
</dbReference>
<dbReference type="EMBL" id="AY128765">
    <property type="protein sequence ID" value="AAM91165.1"/>
    <property type="molecule type" value="mRNA"/>
</dbReference>
<dbReference type="PIR" id="T48555">
    <property type="entry name" value="T48555"/>
</dbReference>
<dbReference type="RefSeq" id="NP_196757.2">
    <property type="nucleotide sequence ID" value="NM_121234.3"/>
</dbReference>
<dbReference type="FunCoup" id="Q8RWH8">
    <property type="interactions" value="607"/>
</dbReference>
<dbReference type="STRING" id="3702.Q8RWH8"/>
<dbReference type="iPTMnet" id="Q8RWH8"/>
<dbReference type="PaxDb" id="3702-AT5G11960.1"/>
<dbReference type="ProteomicsDB" id="251059"/>
<dbReference type="EnsemblPlants" id="AT5G11960.1">
    <property type="protein sequence ID" value="AT5G11960.1"/>
    <property type="gene ID" value="AT5G11960"/>
</dbReference>
<dbReference type="GeneID" id="831069"/>
<dbReference type="Gramene" id="AT5G11960.1">
    <property type="protein sequence ID" value="AT5G11960.1"/>
    <property type="gene ID" value="AT5G11960"/>
</dbReference>
<dbReference type="KEGG" id="ath:AT5G11960"/>
<dbReference type="Araport" id="AT5G11960"/>
<dbReference type="TAIR" id="AT5G11960"/>
<dbReference type="eggNOG" id="ENOG502QSWV">
    <property type="taxonomic scope" value="Eukaryota"/>
</dbReference>
<dbReference type="HOGENOM" id="CLU_048190_0_0_1"/>
<dbReference type="InParanoid" id="Q8RWH8"/>
<dbReference type="OMA" id="HPAMPCG"/>
<dbReference type="OrthoDB" id="1911792at2759"/>
<dbReference type="PhylomeDB" id="Q8RWH8"/>
<dbReference type="PRO" id="PR:Q8RWH8"/>
<dbReference type="Proteomes" id="UP000006548">
    <property type="component" value="Chromosome 5"/>
</dbReference>
<dbReference type="ExpressionAtlas" id="Q8RWH8">
    <property type="expression patterns" value="baseline and differential"/>
</dbReference>
<dbReference type="GO" id="GO:0005769">
    <property type="term" value="C:early endosome"/>
    <property type="evidence" value="ECO:0000250"/>
    <property type="project" value="UniProtKB"/>
</dbReference>
<dbReference type="GO" id="GO:0005886">
    <property type="term" value="C:plasma membrane"/>
    <property type="evidence" value="ECO:0000250"/>
    <property type="project" value="UniProtKB"/>
</dbReference>
<dbReference type="GO" id="GO:0015095">
    <property type="term" value="F:magnesium ion transmembrane transporter activity"/>
    <property type="evidence" value="ECO:0007669"/>
    <property type="project" value="InterPro"/>
</dbReference>
<dbReference type="GO" id="GO:0015693">
    <property type="term" value="P:magnesium ion transport"/>
    <property type="evidence" value="ECO:0000250"/>
    <property type="project" value="UniProtKB"/>
</dbReference>
<dbReference type="FunFam" id="1.10.3730.20:FF:000006">
    <property type="entry name" value="Probable magnesium transporter"/>
    <property type="match status" value="1"/>
</dbReference>
<dbReference type="Gene3D" id="1.10.3730.20">
    <property type="match status" value="1"/>
</dbReference>
<dbReference type="InterPro" id="IPR008521">
    <property type="entry name" value="Mg_trans_NIPA"/>
</dbReference>
<dbReference type="PANTHER" id="PTHR12570">
    <property type="match status" value="1"/>
</dbReference>
<dbReference type="PANTHER" id="PTHR12570:SF65">
    <property type="entry name" value="MAGNESIUM TRANSPORTER NIPA9-RELATED"/>
    <property type="match status" value="1"/>
</dbReference>
<dbReference type="SUPFAM" id="SSF103481">
    <property type="entry name" value="Multidrug resistance efflux transporter EmrE"/>
    <property type="match status" value="2"/>
</dbReference>
<name>NIPA9_ARATH</name>
<proteinExistence type="evidence at transcript level"/>